<comment type="function">
    <text>Involved in the biosynthesis of tetrahydrobiopterin, an essential cofactor of aromatic amino acid hydroxylases. Catalyzes the transformation of 7,8-dihydroneopterin triphosphate into 6-pyruvoyl tetrahydropterin.</text>
</comment>
<comment type="catalytic activity">
    <reaction evidence="6">
        <text>7,8-dihydroneopterin 3'-triphosphate = 6-pyruvoyl-5,6,7,8-tetrahydropterin + triphosphate + H(+)</text>
        <dbReference type="Rhea" id="RHEA:22048"/>
        <dbReference type="ChEBI" id="CHEBI:15378"/>
        <dbReference type="ChEBI" id="CHEBI:18036"/>
        <dbReference type="ChEBI" id="CHEBI:58462"/>
        <dbReference type="ChEBI" id="CHEBI:136564"/>
        <dbReference type="EC" id="4.2.3.12"/>
    </reaction>
    <physiologicalReaction direction="left-to-right" evidence="6">
        <dbReference type="Rhea" id="RHEA:22049"/>
    </physiologicalReaction>
</comment>
<comment type="cofactor">
    <cofactor>
        <name>Zn(2+)</name>
        <dbReference type="ChEBI" id="CHEBI:29105"/>
    </cofactor>
    <text>Binds 1 zinc ion per subunit.</text>
</comment>
<comment type="pathway">
    <text>Cofactor biosynthesis; tetrahydrobiopterin biosynthesis; tetrahydrobiopterin from 7,8-dihydroneopterin triphosphate: step 1/3.</text>
</comment>
<comment type="subunit">
    <text>Homohexamer formed of two homotrimers in a head to head fashion.</text>
</comment>
<comment type="PTM">
    <text evidence="1">Phosphorylation of Ser-18 is required for maximal enzyme activity.</text>
</comment>
<comment type="disease">
    <text>Deficiency leads to phenylketonuria.</text>
</comment>
<comment type="miscellaneous">
    <text>The active site is at the interface between 2 subunits. The proton acceptor Cys is on one subunit, and the charge relay system is on the other subunit.</text>
</comment>
<comment type="similarity">
    <text evidence="5">Belongs to the PTPS family.</text>
</comment>
<organism>
    <name type="scientific">Rattus norvegicus</name>
    <name type="common">Rat</name>
    <dbReference type="NCBI Taxonomy" id="10116"/>
    <lineage>
        <taxon>Eukaryota</taxon>
        <taxon>Metazoa</taxon>
        <taxon>Chordata</taxon>
        <taxon>Craniata</taxon>
        <taxon>Vertebrata</taxon>
        <taxon>Euteleostomi</taxon>
        <taxon>Mammalia</taxon>
        <taxon>Eutheria</taxon>
        <taxon>Euarchontoglires</taxon>
        <taxon>Glires</taxon>
        <taxon>Rodentia</taxon>
        <taxon>Myomorpha</taxon>
        <taxon>Muroidea</taxon>
        <taxon>Muridae</taxon>
        <taxon>Murinae</taxon>
        <taxon>Rattus</taxon>
    </lineage>
</organism>
<gene>
    <name type="primary">Pts</name>
</gene>
<proteinExistence type="evidence at protein level"/>
<dbReference type="EC" id="4.2.3.12" evidence="4"/>
<dbReference type="EMBL" id="M77850">
    <property type="protein sequence ID" value="AAA40625.1"/>
    <property type="molecule type" value="mRNA"/>
</dbReference>
<dbReference type="EMBL" id="BC059140">
    <property type="protein sequence ID" value="AAH59140.1"/>
    <property type="molecule type" value="mRNA"/>
</dbReference>
<dbReference type="PIR" id="A39499">
    <property type="entry name" value="A39499"/>
</dbReference>
<dbReference type="RefSeq" id="NP_058916.1">
    <property type="nucleotide sequence ID" value="NM_017220.2"/>
</dbReference>
<dbReference type="PDB" id="1B66">
    <property type="method" value="X-ray"/>
    <property type="resolution" value="1.90 A"/>
    <property type="chains" value="A/B=5-144"/>
</dbReference>
<dbReference type="PDB" id="1B6Z">
    <property type="method" value="X-ray"/>
    <property type="resolution" value="2.00 A"/>
    <property type="chains" value="A/B=5-144"/>
</dbReference>
<dbReference type="PDB" id="1GTQ">
    <property type="method" value="X-ray"/>
    <property type="resolution" value="2.30 A"/>
    <property type="chains" value="A/B=5-144"/>
</dbReference>
<dbReference type="PDBsum" id="1B66"/>
<dbReference type="PDBsum" id="1B6Z"/>
<dbReference type="PDBsum" id="1GTQ"/>
<dbReference type="SMR" id="P27213"/>
<dbReference type="FunCoup" id="P27213">
    <property type="interactions" value="1249"/>
</dbReference>
<dbReference type="STRING" id="10116.ENSRNOP00000012434"/>
<dbReference type="iPTMnet" id="P27213"/>
<dbReference type="PhosphoSitePlus" id="P27213"/>
<dbReference type="jPOST" id="P27213"/>
<dbReference type="PaxDb" id="10116-ENSRNOP00000012434"/>
<dbReference type="Ensembl" id="ENSRNOT00000012434.4">
    <property type="protein sequence ID" value="ENSRNOP00000012434.1"/>
    <property type="gene ID" value="ENSRNOG00000009250.4"/>
</dbReference>
<dbReference type="GeneID" id="29498"/>
<dbReference type="UCSC" id="RGD:68367">
    <property type="organism name" value="rat"/>
</dbReference>
<dbReference type="AGR" id="RGD:68367"/>
<dbReference type="CTD" id="5805"/>
<dbReference type="RGD" id="68367">
    <property type="gene designation" value="Pts"/>
</dbReference>
<dbReference type="eggNOG" id="KOG4105">
    <property type="taxonomic scope" value="Eukaryota"/>
</dbReference>
<dbReference type="GeneTree" id="ENSGT00390000002752"/>
<dbReference type="HOGENOM" id="CLU_111016_2_0_1"/>
<dbReference type="InParanoid" id="P27213"/>
<dbReference type="OrthoDB" id="25888at9989"/>
<dbReference type="PhylomeDB" id="P27213"/>
<dbReference type="TreeFam" id="TF105796"/>
<dbReference type="BRENDA" id="4.2.3.12">
    <property type="organism ID" value="5301"/>
</dbReference>
<dbReference type="Reactome" id="R-RNO-1474151">
    <property type="pathway name" value="Tetrahydrobiopterin (BH4) synthesis, recycling, salvage and regulation"/>
</dbReference>
<dbReference type="UniPathway" id="UPA00849">
    <property type="reaction ID" value="UER00819"/>
</dbReference>
<dbReference type="EvolutionaryTrace" id="P27213"/>
<dbReference type="PRO" id="PR:P27213"/>
<dbReference type="Proteomes" id="UP000002494">
    <property type="component" value="Chromosome 8"/>
</dbReference>
<dbReference type="Bgee" id="ENSRNOG00000009250">
    <property type="expression patterns" value="Expressed in kidney and 20 other cell types or tissues"/>
</dbReference>
<dbReference type="GO" id="GO:0005739">
    <property type="term" value="C:mitochondrion"/>
    <property type="evidence" value="ECO:0000318"/>
    <property type="project" value="GO_Central"/>
</dbReference>
<dbReference type="GO" id="GO:0003874">
    <property type="term" value="F:6-pyruvoyltetrahydropterin synthase activity"/>
    <property type="evidence" value="ECO:0000314"/>
    <property type="project" value="RGD"/>
</dbReference>
<dbReference type="GO" id="GO:0042802">
    <property type="term" value="F:identical protein binding"/>
    <property type="evidence" value="ECO:0000266"/>
    <property type="project" value="RGD"/>
</dbReference>
<dbReference type="GO" id="GO:0046872">
    <property type="term" value="F:metal ion binding"/>
    <property type="evidence" value="ECO:0007669"/>
    <property type="project" value="UniProtKB-KW"/>
</dbReference>
<dbReference type="GO" id="GO:0006729">
    <property type="term" value="P:tetrahydrobiopterin biosynthetic process"/>
    <property type="evidence" value="ECO:0000266"/>
    <property type="project" value="RGD"/>
</dbReference>
<dbReference type="CDD" id="cd00470">
    <property type="entry name" value="PTPS"/>
    <property type="match status" value="1"/>
</dbReference>
<dbReference type="FunFam" id="3.30.479.10:FF:000003">
    <property type="entry name" value="6-pyruvoyl tetrahydrobiopterin synthase"/>
    <property type="match status" value="1"/>
</dbReference>
<dbReference type="Gene3D" id="3.30.479.10">
    <property type="entry name" value="6-pyruvoyl tetrahydropterin synthase/QueD"/>
    <property type="match status" value="1"/>
</dbReference>
<dbReference type="InterPro" id="IPR007115">
    <property type="entry name" value="6-PTP_synth/QueD"/>
</dbReference>
<dbReference type="InterPro" id="IPR038418">
    <property type="entry name" value="6-PTP_synth/QueD_sf"/>
</dbReference>
<dbReference type="InterPro" id="IPR022470">
    <property type="entry name" value="PTPS_Cys_AS"/>
</dbReference>
<dbReference type="InterPro" id="IPR022469">
    <property type="entry name" value="PTPS_His_AS"/>
</dbReference>
<dbReference type="NCBIfam" id="TIGR00039">
    <property type="entry name" value="6PTHBS"/>
    <property type="match status" value="1"/>
</dbReference>
<dbReference type="PANTHER" id="PTHR12589:SF7">
    <property type="entry name" value="6-PYRUVOYL TETRAHYDROBIOPTERIN SYNTHASE"/>
    <property type="match status" value="1"/>
</dbReference>
<dbReference type="PANTHER" id="PTHR12589">
    <property type="entry name" value="PYRUVOYL TETRAHYDROBIOPTERIN SYNTHASE"/>
    <property type="match status" value="1"/>
</dbReference>
<dbReference type="Pfam" id="PF01242">
    <property type="entry name" value="PTPS"/>
    <property type="match status" value="1"/>
</dbReference>
<dbReference type="PIRSF" id="PIRSF006113">
    <property type="entry name" value="PTP_synth"/>
    <property type="match status" value="1"/>
</dbReference>
<dbReference type="SUPFAM" id="SSF55620">
    <property type="entry name" value="Tetrahydrobiopterin biosynthesis enzymes-like"/>
    <property type="match status" value="1"/>
</dbReference>
<dbReference type="PROSITE" id="PS00987">
    <property type="entry name" value="PTPS_1"/>
    <property type="match status" value="1"/>
</dbReference>
<dbReference type="PROSITE" id="PS00988">
    <property type="entry name" value="PTPS_2"/>
    <property type="match status" value="1"/>
</dbReference>
<protein>
    <recommendedName>
        <fullName>6-pyruvoyl tetrahydrobiopterin synthase</fullName>
        <shortName>PTP synthase</shortName>
        <shortName>PTPS</shortName>
        <ecNumber evidence="4">4.2.3.12</ecNumber>
    </recommendedName>
</protein>
<sequence>MNAAVGLRRRARLSRLVSFSASHRLHSPSLSAEENLKVFGKCNNPNGHGHNYKVVVTIHGEIDPVTGMVMNLTDLKEYMEEAIMKPLDHKNLDLDVPYFADVVSTTENVAVYIWENLQRLLPVGALYKVKVYETDNNIVVYKGE</sequence>
<accession>P27213</accession>
<keyword id="KW-0002">3D-structure</keyword>
<keyword id="KW-0903">Direct protein sequencing</keyword>
<keyword id="KW-0456">Lyase</keyword>
<keyword id="KW-0479">Metal-binding</keyword>
<keyword id="KW-0586">Phenylketonuria</keyword>
<keyword id="KW-0597">Phosphoprotein</keyword>
<keyword id="KW-1185">Reference proteome</keyword>
<keyword id="KW-0783">Tetrahydrobiopterin biosynthesis</keyword>
<keyword id="KW-0862">Zinc</keyword>
<feature type="propeptide" id="PRO_0000029868">
    <location>
        <begin position="1"/>
        <end position="4"/>
    </location>
</feature>
<feature type="chain" id="PRO_0000029869" description="6-pyruvoyl tetrahydrobiopterin synthase">
    <location>
        <begin position="5"/>
        <end position="144"/>
    </location>
</feature>
<feature type="active site" description="Proton acceptor">
    <location>
        <position position="42"/>
    </location>
</feature>
<feature type="active site" description="Charge relay system">
    <location>
        <position position="89"/>
    </location>
</feature>
<feature type="active site" description="Charge relay system">
    <location>
        <position position="133"/>
    </location>
</feature>
<feature type="binding site">
    <location>
        <position position="23"/>
    </location>
    <ligand>
        <name>Zn(2+)</name>
        <dbReference type="ChEBI" id="CHEBI:29105"/>
    </ligand>
</feature>
<feature type="binding site">
    <location>
        <position position="48"/>
    </location>
    <ligand>
        <name>Zn(2+)</name>
        <dbReference type="ChEBI" id="CHEBI:29105"/>
    </ligand>
</feature>
<feature type="binding site">
    <location>
        <position position="50"/>
    </location>
    <ligand>
        <name>Zn(2+)</name>
        <dbReference type="ChEBI" id="CHEBI:29105"/>
    </ligand>
</feature>
<feature type="modified residue" description="Phosphoserine" evidence="2">
    <location>
        <position position="18"/>
    </location>
</feature>
<feature type="modified residue" description="Phosphoserine" evidence="3">
    <location>
        <position position="27"/>
    </location>
</feature>
<feature type="modified residue" description="Phosphotyrosine" evidence="2">
    <location>
        <position position="127"/>
    </location>
</feature>
<feature type="strand" evidence="7">
    <location>
        <begin position="10"/>
        <end position="23"/>
    </location>
</feature>
<feature type="helix" evidence="7">
    <location>
        <begin position="32"/>
        <end position="39"/>
    </location>
</feature>
<feature type="helix" evidence="7">
    <location>
        <begin position="40"/>
        <end position="43"/>
    </location>
</feature>
<feature type="strand" evidence="7">
    <location>
        <begin position="48"/>
        <end position="61"/>
    </location>
</feature>
<feature type="turn" evidence="7">
    <location>
        <begin position="64"/>
        <end position="66"/>
    </location>
</feature>
<feature type="helix" evidence="7">
    <location>
        <begin position="72"/>
        <end position="82"/>
    </location>
</feature>
<feature type="helix" evidence="7">
    <location>
        <begin position="84"/>
        <end position="87"/>
    </location>
</feature>
<feature type="helix" evidence="7">
    <location>
        <begin position="92"/>
        <end position="95"/>
    </location>
</feature>
<feature type="helix" evidence="7">
    <location>
        <begin position="97"/>
        <end position="99"/>
    </location>
</feature>
<feature type="strand" evidence="7">
    <location>
        <begin position="100"/>
        <end position="102"/>
    </location>
</feature>
<feature type="helix" evidence="7">
    <location>
        <begin position="106"/>
        <end position="120"/>
    </location>
</feature>
<feature type="turn" evidence="8">
    <location>
        <begin position="123"/>
        <end position="125"/>
    </location>
</feature>
<feature type="strand" evidence="7">
    <location>
        <begin position="126"/>
        <end position="134"/>
    </location>
</feature>
<feature type="strand" evidence="7">
    <location>
        <begin position="137"/>
        <end position="141"/>
    </location>
</feature>
<name>PTPS_RAT</name>
<evidence type="ECO:0000250" key="1"/>
<evidence type="ECO:0000250" key="2">
    <source>
        <dbReference type="UniProtKB" id="Q03393"/>
    </source>
</evidence>
<evidence type="ECO:0000250" key="3">
    <source>
        <dbReference type="UniProtKB" id="Q9R1Z7"/>
    </source>
</evidence>
<evidence type="ECO:0000269" key="4">
    <source>
    </source>
</evidence>
<evidence type="ECO:0000305" key="5"/>
<evidence type="ECO:0000305" key="6">
    <source>
    </source>
</evidence>
<evidence type="ECO:0007829" key="7">
    <source>
        <dbReference type="PDB" id="1B66"/>
    </source>
</evidence>
<evidence type="ECO:0007829" key="8">
    <source>
        <dbReference type="PDB" id="1GTQ"/>
    </source>
</evidence>
<reference key="1">
    <citation type="journal article" date="1991" name="J. Biol. Chem.">
        <title>Purification and cDNA cloning of rat 6-pyruvoyl-tetrahydropterin synthase.</title>
        <authorList>
            <person name="Inoue Y."/>
            <person name="Kawasaki Y."/>
            <person name="Harada T."/>
            <person name="Hatakeyama K."/>
            <person name="Kagamiyama H."/>
        </authorList>
    </citation>
    <scope>NUCLEOTIDE SEQUENCE [MRNA]</scope>
    <scope>PARTIAL PROTEIN SEQUENCE</scope>
    <scope>CATALYTIC ACTIVITY</scope>
    <source>
        <strain>Wistar</strain>
        <tissue>Liver</tissue>
    </source>
</reference>
<reference key="2">
    <citation type="journal article" date="2004" name="Genome Res.">
        <title>The status, quality, and expansion of the NIH full-length cDNA project: the Mammalian Gene Collection (MGC).</title>
        <authorList>
            <consortium name="The MGC Project Team"/>
        </authorList>
    </citation>
    <scope>NUCLEOTIDE SEQUENCE [LARGE SCALE MRNA]</scope>
    <source>
        <tissue>Pituitary</tissue>
    </source>
</reference>
<reference key="3">
    <citation type="journal article" date="1994" name="EMBO J.">
        <title>Three-dimensional structure of 6-pyruvoyl tetrahydropterin synthase, an enzyme involved in tetrahydrobiopterin biosynthesis.</title>
        <authorList>
            <person name="Nar H."/>
            <person name="Huber R."/>
            <person name="Heizmann C.W."/>
            <person name="Thoeny B."/>
            <person name="Buergisser D."/>
        </authorList>
    </citation>
    <scope>X-RAY CRYSTALLOGRAPHY (2.3 ANGSTROMS)</scope>
</reference>
<reference key="4">
    <citation type="journal article" date="1999" name="J. Mol. Biol.">
        <title>Crystallographic and kinetic investigations on the mechanism of 6-pyruvoyl tetrahydropterin synthase.</title>
        <authorList>
            <person name="Ploom T."/>
            <person name="Thoeny B."/>
            <person name="Yim J."/>
            <person name="Lee S."/>
            <person name="Nar H."/>
            <person name="Leimbacher W."/>
            <person name="Richardson J."/>
            <person name="Huber R."/>
            <person name="Auerbach G."/>
        </authorList>
    </citation>
    <scope>X-RAY CRYSTALLOGRAPHY (1.9 ANGSTROMS)</scope>
</reference>